<comment type="catalytic activity">
    <reaction evidence="1">
        <text>5-dehydro-4-deoxy-D-glucarate + H(+) = 2,5-dioxopentanoate + CO2 + H2O</text>
        <dbReference type="Rhea" id="RHEA:24608"/>
        <dbReference type="ChEBI" id="CHEBI:15377"/>
        <dbReference type="ChEBI" id="CHEBI:15378"/>
        <dbReference type="ChEBI" id="CHEBI:16526"/>
        <dbReference type="ChEBI" id="CHEBI:42819"/>
        <dbReference type="ChEBI" id="CHEBI:58136"/>
        <dbReference type="EC" id="4.2.1.41"/>
    </reaction>
</comment>
<comment type="pathway">
    <text evidence="1">Carbohydrate acid metabolism; D-glucarate degradation; 2,5-dioxopentanoate from D-glucarate: step 2/2.</text>
</comment>
<comment type="similarity">
    <text evidence="1">Belongs to the DapA family.</text>
</comment>
<evidence type="ECO:0000255" key="1">
    <source>
        <dbReference type="HAMAP-Rule" id="MF_00694"/>
    </source>
</evidence>
<sequence length="303" mass="32515">MQPQELKTIMGSGLLSFPLTDFDSEGHFNARGYAERLEWLAPYGASALFAAGGTGEFFSLTADEYPAIIETAVQTCRGKVPIIAGAGGPTRFAIQCAQAAEKAGAHGILLLPHYLTEAGQEGLAAHVEAVCKSVKFGVIVYNRGQSRFTPETLARLAERNANLVGFKDGVGDIELMNSIYMKMGDRFAYLGGLPTAEVYAAAYKALGTPVYSSAVFNFIPKTAMDFYHAVANDDQATQHRLLRSFFMPYLALRNRMPGYAVSIVKAGAKIVGHDAGPVRAPLTDLKADEMAALKALIDQLGPQ</sequence>
<gene>
    <name type="ordered locus">Aave_2587</name>
</gene>
<dbReference type="EC" id="4.2.1.41" evidence="1"/>
<dbReference type="EMBL" id="CP000512">
    <property type="protein sequence ID" value="ABM33159.1"/>
    <property type="molecule type" value="Genomic_DNA"/>
</dbReference>
<dbReference type="RefSeq" id="WP_011795684.1">
    <property type="nucleotide sequence ID" value="NC_008752.1"/>
</dbReference>
<dbReference type="SMR" id="A1TQC1"/>
<dbReference type="STRING" id="397945.Aave_2587"/>
<dbReference type="GeneID" id="79792174"/>
<dbReference type="KEGG" id="aav:Aave_2587"/>
<dbReference type="eggNOG" id="COG0329">
    <property type="taxonomic scope" value="Bacteria"/>
</dbReference>
<dbReference type="HOGENOM" id="CLU_049343_5_2_4"/>
<dbReference type="OrthoDB" id="8995637at2"/>
<dbReference type="UniPathway" id="UPA00564">
    <property type="reaction ID" value="UER00628"/>
</dbReference>
<dbReference type="Proteomes" id="UP000002596">
    <property type="component" value="Chromosome"/>
</dbReference>
<dbReference type="GO" id="GO:0008840">
    <property type="term" value="F:4-hydroxy-tetrahydrodipicolinate synthase activity"/>
    <property type="evidence" value="ECO:0007669"/>
    <property type="project" value="TreeGrafter"/>
</dbReference>
<dbReference type="GO" id="GO:0047448">
    <property type="term" value="F:5-dehydro-4-deoxyglucarate dehydratase activity"/>
    <property type="evidence" value="ECO:0007669"/>
    <property type="project" value="UniProtKB-UniRule"/>
</dbReference>
<dbReference type="GO" id="GO:0042838">
    <property type="term" value="P:D-glucarate catabolic process"/>
    <property type="evidence" value="ECO:0007669"/>
    <property type="project" value="UniProtKB-UniRule"/>
</dbReference>
<dbReference type="CDD" id="cd00951">
    <property type="entry name" value="KDGDH"/>
    <property type="match status" value="1"/>
</dbReference>
<dbReference type="Gene3D" id="3.20.20.70">
    <property type="entry name" value="Aldolase class I"/>
    <property type="match status" value="1"/>
</dbReference>
<dbReference type="HAMAP" id="MF_00694">
    <property type="entry name" value="KDGDH"/>
    <property type="match status" value="1"/>
</dbReference>
<dbReference type="InterPro" id="IPR013785">
    <property type="entry name" value="Aldolase_TIM"/>
</dbReference>
<dbReference type="InterPro" id="IPR002220">
    <property type="entry name" value="DapA-like"/>
</dbReference>
<dbReference type="InterPro" id="IPR017655">
    <property type="entry name" value="Dehydro-deoxyglucarate_dehyd"/>
</dbReference>
<dbReference type="NCBIfam" id="TIGR03249">
    <property type="entry name" value="KdgD"/>
    <property type="match status" value="1"/>
</dbReference>
<dbReference type="NCBIfam" id="NF002958">
    <property type="entry name" value="PRK03620.1"/>
    <property type="match status" value="1"/>
</dbReference>
<dbReference type="PANTHER" id="PTHR12128:SF19">
    <property type="entry name" value="5-DEHYDRO-4-DEOXYGLUCARATE DEHYDRATASE 2-RELATED"/>
    <property type="match status" value="1"/>
</dbReference>
<dbReference type="PANTHER" id="PTHR12128">
    <property type="entry name" value="DIHYDRODIPICOLINATE SYNTHASE"/>
    <property type="match status" value="1"/>
</dbReference>
<dbReference type="Pfam" id="PF00701">
    <property type="entry name" value="DHDPS"/>
    <property type="match status" value="1"/>
</dbReference>
<dbReference type="PIRSF" id="PIRSF001365">
    <property type="entry name" value="DHDPS"/>
    <property type="match status" value="1"/>
</dbReference>
<dbReference type="SMART" id="SM01130">
    <property type="entry name" value="DHDPS"/>
    <property type="match status" value="1"/>
</dbReference>
<dbReference type="SUPFAM" id="SSF51569">
    <property type="entry name" value="Aldolase"/>
    <property type="match status" value="1"/>
</dbReference>
<organism>
    <name type="scientific">Paracidovorax citrulli (strain AAC00-1)</name>
    <name type="common">Acidovorax citrulli</name>
    <dbReference type="NCBI Taxonomy" id="397945"/>
    <lineage>
        <taxon>Bacteria</taxon>
        <taxon>Pseudomonadati</taxon>
        <taxon>Pseudomonadota</taxon>
        <taxon>Betaproteobacteria</taxon>
        <taxon>Burkholderiales</taxon>
        <taxon>Comamonadaceae</taxon>
        <taxon>Paracidovorax</taxon>
    </lineage>
</organism>
<accession>A1TQC1</accession>
<feature type="chain" id="PRO_1000045395" description="Probable 5-dehydro-4-deoxyglucarate dehydratase">
    <location>
        <begin position="1"/>
        <end position="303"/>
    </location>
</feature>
<reference key="1">
    <citation type="submission" date="2006-12" db="EMBL/GenBank/DDBJ databases">
        <title>Complete sequence of Acidovorax avenae subsp. citrulli AAC00-1.</title>
        <authorList>
            <person name="Copeland A."/>
            <person name="Lucas S."/>
            <person name="Lapidus A."/>
            <person name="Barry K."/>
            <person name="Detter J.C."/>
            <person name="Glavina del Rio T."/>
            <person name="Dalin E."/>
            <person name="Tice H."/>
            <person name="Pitluck S."/>
            <person name="Kiss H."/>
            <person name="Brettin T."/>
            <person name="Bruce D."/>
            <person name="Han C."/>
            <person name="Tapia R."/>
            <person name="Gilna P."/>
            <person name="Schmutz J."/>
            <person name="Larimer F."/>
            <person name="Land M."/>
            <person name="Hauser L."/>
            <person name="Kyrpides N."/>
            <person name="Kim E."/>
            <person name="Stahl D."/>
            <person name="Richardson P."/>
        </authorList>
    </citation>
    <scope>NUCLEOTIDE SEQUENCE [LARGE SCALE GENOMIC DNA]</scope>
    <source>
        <strain>AAC00-1</strain>
    </source>
</reference>
<name>KDGD_PARC0</name>
<protein>
    <recommendedName>
        <fullName evidence="1">Probable 5-dehydro-4-deoxyglucarate dehydratase</fullName>
        <ecNumber evidence="1">4.2.1.41</ecNumber>
    </recommendedName>
    <alternativeName>
        <fullName evidence="1">5-keto-4-deoxy-glucarate dehydratase</fullName>
        <shortName evidence="1">KDGDH</shortName>
    </alternativeName>
</protein>
<proteinExistence type="inferred from homology"/>
<keyword id="KW-0456">Lyase</keyword>